<comment type="function">
    <text evidence="1">Acts as one of several non-catalytic accessory components of the cytoplasmic dynein 1 complex that are thought to be involved in linking dynein to cargos and to adapter proteins that regulate dynein function. Cytoplasmic dynein 1 acts as a motor for the intracellular retrograde motility of vesicles and organelles along microtubules. May play a role in binding dynein to membranous organelles or chromosomes (By similarity).</text>
</comment>
<comment type="subunit">
    <text evidence="1">Homodimer. The cytoplasmic dynein 1 complex consists of two catalytic heavy chains (HCs) and a number of non-catalytic subunits presented by intermediate chains (ICs), light intermediate chains (LICs) and light chains (LCs) (By similarity).</text>
</comment>
<comment type="subcellular location">
    <subcellularLocation>
        <location evidence="1">Cytoplasm</location>
        <location evidence="1">Cytoskeleton</location>
    </subcellularLocation>
</comment>
<comment type="similarity">
    <text evidence="4">Belongs to the dynein light intermediate chain family.</text>
</comment>
<protein>
    <recommendedName>
        <fullName>Cytoplasmic dynein 1 light intermediate chain 1</fullName>
    </recommendedName>
    <alternativeName>
        <fullName>Dynein light intermediate chain 1, cytosolic</fullName>
    </alternativeName>
</protein>
<dbReference type="EMBL" id="AAFI02000197">
    <property type="protein sequence ID" value="EAL61001.1"/>
    <property type="molecule type" value="Genomic_DNA"/>
</dbReference>
<dbReference type="RefSeq" id="XP_629428.1">
    <property type="nucleotide sequence ID" value="XM_629426.1"/>
</dbReference>
<dbReference type="SMR" id="Q54CI8"/>
<dbReference type="FunCoup" id="Q54CI8">
    <property type="interactions" value="376"/>
</dbReference>
<dbReference type="STRING" id="44689.Q54CI8"/>
<dbReference type="GlyGen" id="Q54CI8">
    <property type="glycosylation" value="2 sites"/>
</dbReference>
<dbReference type="PaxDb" id="44689-DDB0233302"/>
<dbReference type="EnsemblProtists" id="EAL61001">
    <property type="protein sequence ID" value="EAL61001"/>
    <property type="gene ID" value="DDB_G0292904"/>
</dbReference>
<dbReference type="GeneID" id="8628947"/>
<dbReference type="KEGG" id="ddi:DDB_G0292904"/>
<dbReference type="dictyBase" id="DDB_G0292904">
    <property type="gene designation" value="dync1li1"/>
</dbReference>
<dbReference type="VEuPathDB" id="AmoebaDB:DDB_G0292904"/>
<dbReference type="eggNOG" id="KOG3905">
    <property type="taxonomic scope" value="Eukaryota"/>
</dbReference>
<dbReference type="HOGENOM" id="CLU_021937_2_0_1"/>
<dbReference type="InParanoid" id="Q54CI8"/>
<dbReference type="OMA" id="WANVCTE"/>
<dbReference type="PhylomeDB" id="Q54CI8"/>
<dbReference type="Reactome" id="R-DDI-6798695">
    <property type="pathway name" value="Neutrophil degranulation"/>
</dbReference>
<dbReference type="Reactome" id="R-DDI-6807878">
    <property type="pathway name" value="COPI-mediated anterograde transport"/>
</dbReference>
<dbReference type="Reactome" id="R-DDI-9646399">
    <property type="pathway name" value="Aggrephagy"/>
</dbReference>
<dbReference type="PRO" id="PR:Q54CI8"/>
<dbReference type="Proteomes" id="UP000002195">
    <property type="component" value="Chromosome 6"/>
</dbReference>
<dbReference type="GO" id="GO:0005737">
    <property type="term" value="C:cytoplasm"/>
    <property type="evidence" value="ECO:0007669"/>
    <property type="project" value="UniProtKB-KW"/>
</dbReference>
<dbReference type="GO" id="GO:0005868">
    <property type="term" value="C:cytoplasmic dynein complex"/>
    <property type="evidence" value="ECO:0000318"/>
    <property type="project" value="GO_Central"/>
</dbReference>
<dbReference type="GO" id="GO:0005874">
    <property type="term" value="C:microtubule"/>
    <property type="evidence" value="ECO:0007669"/>
    <property type="project" value="UniProtKB-KW"/>
</dbReference>
<dbReference type="GO" id="GO:0005524">
    <property type="term" value="F:ATP binding"/>
    <property type="evidence" value="ECO:0007669"/>
    <property type="project" value="UniProtKB-KW"/>
</dbReference>
<dbReference type="GO" id="GO:0045504">
    <property type="term" value="F:dynein heavy chain binding"/>
    <property type="evidence" value="ECO:0000318"/>
    <property type="project" value="GO_Central"/>
</dbReference>
<dbReference type="GO" id="GO:0000226">
    <property type="term" value="P:microtubule cytoskeleton organization"/>
    <property type="evidence" value="ECO:0000318"/>
    <property type="project" value="GO_Central"/>
</dbReference>
<dbReference type="GO" id="GO:0007018">
    <property type="term" value="P:microtubule-based movement"/>
    <property type="evidence" value="ECO:0000318"/>
    <property type="project" value="GO_Central"/>
</dbReference>
<dbReference type="InterPro" id="IPR008467">
    <property type="entry name" value="Dynein1_light_intermed_chain"/>
</dbReference>
<dbReference type="InterPro" id="IPR022780">
    <property type="entry name" value="Dynein_light_int_chain"/>
</dbReference>
<dbReference type="InterPro" id="IPR027417">
    <property type="entry name" value="P-loop_NTPase"/>
</dbReference>
<dbReference type="PANTHER" id="PTHR12688">
    <property type="entry name" value="DYNEIN LIGHT INTERMEDIATE CHAIN"/>
    <property type="match status" value="1"/>
</dbReference>
<dbReference type="PANTHER" id="PTHR12688:SF0">
    <property type="entry name" value="DYNEIN LIGHT INTERMEDIATE CHAIN"/>
    <property type="match status" value="1"/>
</dbReference>
<dbReference type="Pfam" id="PF05783">
    <property type="entry name" value="DLIC"/>
    <property type="match status" value="2"/>
</dbReference>
<dbReference type="SUPFAM" id="SSF52540">
    <property type="entry name" value="P-loop containing nucleoside triphosphate hydrolases"/>
    <property type="match status" value="1"/>
</dbReference>
<sequence>MVEQQQQEEDIWGQILRESSNKNNYFEKRDVAILGDPTSGKSLLLSKFDTVSNVESLKSIALSYTFSDIYEDDTSEDPVGRINYWSLEGEASQNDLLKFSLNKENIKNCMVIITLDFSQPWNLVESLKKWLGILEEHIKSIFKDDKNGFKNLQDKLSIKWHEYEEPTTTAATTTTTTTSNNIENNTNKTSPTTDKIQTNNVQKKKKKKVNISSAEDASVLPPLSENILINNLGVPILVACCKSDSVVMLEKDFDYKDELFDYIQQYLRRICLQYGAGLIYTSARKEINCGVTLEYIENILFGFELKSKTQLIEKDQIFVPAGWDTLAKIQVDFENQKVCKDTDEPYENIVKKPSIIKRREQTQTNSIICDDDQDFLGKIKSQLDNDDQSSINSPSTPSPLSQSSNNNNSNNNINNTSTPSINTPLQPTDKPLSDIKSSNNPVAASPSAERAALANFFTSLISKDKTSSRKDLKSSLASPPTTSVSSNAREDAKKELDKLKQQKK</sequence>
<evidence type="ECO:0000250" key="1"/>
<evidence type="ECO:0000255" key="2"/>
<evidence type="ECO:0000256" key="3">
    <source>
        <dbReference type="SAM" id="MobiDB-lite"/>
    </source>
</evidence>
<evidence type="ECO:0000305" key="4"/>
<proteinExistence type="inferred from homology"/>
<keyword id="KW-0067">ATP-binding</keyword>
<keyword id="KW-0963">Cytoplasm</keyword>
<keyword id="KW-0206">Cytoskeleton</keyword>
<keyword id="KW-0243">Dynein</keyword>
<keyword id="KW-0493">Microtubule</keyword>
<keyword id="KW-0505">Motor protein</keyword>
<keyword id="KW-0547">Nucleotide-binding</keyword>
<keyword id="KW-1185">Reference proteome</keyword>
<keyword id="KW-0813">Transport</keyword>
<feature type="chain" id="PRO_0000327573" description="Cytoplasmic dynein 1 light intermediate chain 1">
    <location>
        <begin position="1"/>
        <end position="504"/>
    </location>
</feature>
<feature type="region of interest" description="Disordered" evidence="3">
    <location>
        <begin position="167"/>
        <end position="195"/>
    </location>
</feature>
<feature type="region of interest" description="Disordered" evidence="3">
    <location>
        <begin position="383"/>
        <end position="446"/>
    </location>
</feature>
<feature type="region of interest" description="Disordered" evidence="3">
    <location>
        <begin position="464"/>
        <end position="504"/>
    </location>
</feature>
<feature type="compositionally biased region" description="Low complexity" evidence="3">
    <location>
        <begin position="167"/>
        <end position="189"/>
    </location>
</feature>
<feature type="compositionally biased region" description="Low complexity" evidence="3">
    <location>
        <begin position="392"/>
        <end position="425"/>
    </location>
</feature>
<feature type="compositionally biased region" description="Low complexity" evidence="3">
    <location>
        <begin position="437"/>
        <end position="446"/>
    </location>
</feature>
<feature type="compositionally biased region" description="Basic and acidic residues" evidence="3">
    <location>
        <begin position="464"/>
        <end position="473"/>
    </location>
</feature>
<feature type="compositionally biased region" description="Polar residues" evidence="3">
    <location>
        <begin position="475"/>
        <end position="487"/>
    </location>
</feature>
<feature type="compositionally biased region" description="Basic and acidic residues" evidence="3">
    <location>
        <begin position="488"/>
        <end position="504"/>
    </location>
</feature>
<feature type="binding site" evidence="2">
    <location>
        <begin position="35"/>
        <end position="42"/>
    </location>
    <ligand>
        <name>ATP</name>
        <dbReference type="ChEBI" id="CHEBI:30616"/>
    </ligand>
</feature>
<gene>
    <name type="primary">dync1li1</name>
    <name type="ORF">DDB_G0292904</name>
</gene>
<accession>Q54CI8</accession>
<name>DC1L1_DICDI</name>
<reference key="1">
    <citation type="journal article" date="2005" name="Nature">
        <title>The genome of the social amoeba Dictyostelium discoideum.</title>
        <authorList>
            <person name="Eichinger L."/>
            <person name="Pachebat J.A."/>
            <person name="Gloeckner G."/>
            <person name="Rajandream M.A."/>
            <person name="Sucgang R."/>
            <person name="Berriman M."/>
            <person name="Song J."/>
            <person name="Olsen R."/>
            <person name="Szafranski K."/>
            <person name="Xu Q."/>
            <person name="Tunggal B."/>
            <person name="Kummerfeld S."/>
            <person name="Madera M."/>
            <person name="Konfortov B.A."/>
            <person name="Rivero F."/>
            <person name="Bankier A.T."/>
            <person name="Lehmann R."/>
            <person name="Hamlin N."/>
            <person name="Davies R."/>
            <person name="Gaudet P."/>
            <person name="Fey P."/>
            <person name="Pilcher K."/>
            <person name="Chen G."/>
            <person name="Saunders D."/>
            <person name="Sodergren E.J."/>
            <person name="Davis P."/>
            <person name="Kerhornou A."/>
            <person name="Nie X."/>
            <person name="Hall N."/>
            <person name="Anjard C."/>
            <person name="Hemphill L."/>
            <person name="Bason N."/>
            <person name="Farbrother P."/>
            <person name="Desany B."/>
            <person name="Just E."/>
            <person name="Morio T."/>
            <person name="Rost R."/>
            <person name="Churcher C.M."/>
            <person name="Cooper J."/>
            <person name="Haydock S."/>
            <person name="van Driessche N."/>
            <person name="Cronin A."/>
            <person name="Goodhead I."/>
            <person name="Muzny D.M."/>
            <person name="Mourier T."/>
            <person name="Pain A."/>
            <person name="Lu M."/>
            <person name="Harper D."/>
            <person name="Lindsay R."/>
            <person name="Hauser H."/>
            <person name="James K.D."/>
            <person name="Quiles M."/>
            <person name="Madan Babu M."/>
            <person name="Saito T."/>
            <person name="Buchrieser C."/>
            <person name="Wardroper A."/>
            <person name="Felder M."/>
            <person name="Thangavelu M."/>
            <person name="Johnson D."/>
            <person name="Knights A."/>
            <person name="Loulseged H."/>
            <person name="Mungall K.L."/>
            <person name="Oliver K."/>
            <person name="Price C."/>
            <person name="Quail M.A."/>
            <person name="Urushihara H."/>
            <person name="Hernandez J."/>
            <person name="Rabbinowitsch E."/>
            <person name="Steffen D."/>
            <person name="Sanders M."/>
            <person name="Ma J."/>
            <person name="Kohara Y."/>
            <person name="Sharp S."/>
            <person name="Simmonds M.N."/>
            <person name="Spiegler S."/>
            <person name="Tivey A."/>
            <person name="Sugano S."/>
            <person name="White B."/>
            <person name="Walker D."/>
            <person name="Woodward J.R."/>
            <person name="Winckler T."/>
            <person name="Tanaka Y."/>
            <person name="Shaulsky G."/>
            <person name="Schleicher M."/>
            <person name="Weinstock G.M."/>
            <person name="Rosenthal A."/>
            <person name="Cox E.C."/>
            <person name="Chisholm R.L."/>
            <person name="Gibbs R.A."/>
            <person name="Loomis W.F."/>
            <person name="Platzer M."/>
            <person name="Kay R.R."/>
            <person name="Williams J.G."/>
            <person name="Dear P.H."/>
            <person name="Noegel A.A."/>
            <person name="Barrell B.G."/>
            <person name="Kuspa A."/>
        </authorList>
    </citation>
    <scope>NUCLEOTIDE SEQUENCE [LARGE SCALE GENOMIC DNA]</scope>
    <source>
        <strain>AX4</strain>
    </source>
</reference>
<organism>
    <name type="scientific">Dictyostelium discoideum</name>
    <name type="common">Social amoeba</name>
    <dbReference type="NCBI Taxonomy" id="44689"/>
    <lineage>
        <taxon>Eukaryota</taxon>
        <taxon>Amoebozoa</taxon>
        <taxon>Evosea</taxon>
        <taxon>Eumycetozoa</taxon>
        <taxon>Dictyostelia</taxon>
        <taxon>Dictyosteliales</taxon>
        <taxon>Dictyosteliaceae</taxon>
        <taxon>Dictyostelium</taxon>
    </lineage>
</organism>